<name>VATE2_ARATH</name>
<gene>
    <name type="primary">VHA-E2</name>
    <name type="ordered locus">At3g08560</name>
    <name type="ORF">F17O14.3</name>
</gene>
<organism>
    <name type="scientific">Arabidopsis thaliana</name>
    <name type="common">Mouse-ear cress</name>
    <dbReference type="NCBI Taxonomy" id="3702"/>
    <lineage>
        <taxon>Eukaryota</taxon>
        <taxon>Viridiplantae</taxon>
        <taxon>Streptophyta</taxon>
        <taxon>Embryophyta</taxon>
        <taxon>Tracheophyta</taxon>
        <taxon>Spermatophyta</taxon>
        <taxon>Magnoliopsida</taxon>
        <taxon>eudicotyledons</taxon>
        <taxon>Gunneridae</taxon>
        <taxon>Pentapetalae</taxon>
        <taxon>rosids</taxon>
        <taxon>malvids</taxon>
        <taxon>Brassicales</taxon>
        <taxon>Brassicaceae</taxon>
        <taxon>Camelineae</taxon>
        <taxon>Arabidopsis</taxon>
    </lineage>
</organism>
<proteinExistence type="evidence at transcript level"/>
<comment type="function">
    <text evidence="1">Subunit of the peripheral V1 complex of vacuolar ATPase essential for assembly or catalytic function. V-ATPase is responsible for acidifying a variety of intracellular compartments in eukaryotic cells (By similarity).</text>
</comment>
<comment type="subunit">
    <text>V-ATPase is a heteromultimeric enzyme composed of a peripheral catalytic V1 complex (components A to H) attached to an integral membrane V0 proton pore complex (components: a, c, c'', d and e).</text>
</comment>
<comment type="subcellular location">
    <subcellularLocation>
        <location evidence="1">Vacuole membrane</location>
        <topology evidence="1">Peripheral membrane protein</topology>
    </subcellularLocation>
</comment>
<comment type="similarity">
    <text evidence="4">Belongs to the V-ATPase E subunit family.</text>
</comment>
<protein>
    <recommendedName>
        <fullName>V-type proton ATPase subunit E2</fullName>
        <shortName>V-ATPase subunit E2</shortName>
    </recommendedName>
    <alternativeName>
        <fullName>Vacuolar H(+)-ATPase subunit E isoform 2</fullName>
    </alternativeName>
    <alternativeName>
        <fullName>Vacuolar proton pump subunit E2</fullName>
    </alternativeName>
</protein>
<accession>Q9C9Z8</accession>
<reference key="1">
    <citation type="journal article" date="2000" name="Nature">
        <title>Sequence and analysis of chromosome 3 of the plant Arabidopsis thaliana.</title>
        <authorList>
            <person name="Salanoubat M."/>
            <person name="Lemcke K."/>
            <person name="Rieger M."/>
            <person name="Ansorge W."/>
            <person name="Unseld M."/>
            <person name="Fartmann B."/>
            <person name="Valle G."/>
            <person name="Bloecker H."/>
            <person name="Perez-Alonso M."/>
            <person name="Obermaier B."/>
            <person name="Delseny M."/>
            <person name="Boutry M."/>
            <person name="Grivell L.A."/>
            <person name="Mache R."/>
            <person name="Puigdomenech P."/>
            <person name="De Simone V."/>
            <person name="Choisne N."/>
            <person name="Artiguenave F."/>
            <person name="Robert C."/>
            <person name="Brottier P."/>
            <person name="Wincker P."/>
            <person name="Cattolico L."/>
            <person name="Weissenbach J."/>
            <person name="Saurin W."/>
            <person name="Quetier F."/>
            <person name="Schaefer M."/>
            <person name="Mueller-Auer S."/>
            <person name="Gabel C."/>
            <person name="Fuchs M."/>
            <person name="Benes V."/>
            <person name="Wurmbach E."/>
            <person name="Drzonek H."/>
            <person name="Erfle H."/>
            <person name="Jordan N."/>
            <person name="Bangert S."/>
            <person name="Wiedelmann R."/>
            <person name="Kranz H."/>
            <person name="Voss H."/>
            <person name="Holland R."/>
            <person name="Brandt P."/>
            <person name="Nyakatura G."/>
            <person name="Vezzi A."/>
            <person name="D'Angelo M."/>
            <person name="Pallavicini A."/>
            <person name="Toppo S."/>
            <person name="Simionati B."/>
            <person name="Conrad A."/>
            <person name="Hornischer K."/>
            <person name="Kauer G."/>
            <person name="Loehnert T.-H."/>
            <person name="Nordsiek G."/>
            <person name="Reichelt J."/>
            <person name="Scharfe M."/>
            <person name="Schoen O."/>
            <person name="Bargues M."/>
            <person name="Terol J."/>
            <person name="Climent J."/>
            <person name="Navarro P."/>
            <person name="Collado C."/>
            <person name="Perez-Perez A."/>
            <person name="Ottenwaelder B."/>
            <person name="Duchemin D."/>
            <person name="Cooke R."/>
            <person name="Laudie M."/>
            <person name="Berger-Llauro C."/>
            <person name="Purnelle B."/>
            <person name="Masuy D."/>
            <person name="de Haan M."/>
            <person name="Maarse A.C."/>
            <person name="Alcaraz J.-P."/>
            <person name="Cottet A."/>
            <person name="Casacuberta E."/>
            <person name="Monfort A."/>
            <person name="Argiriou A."/>
            <person name="Flores M."/>
            <person name="Liguori R."/>
            <person name="Vitale D."/>
            <person name="Mannhaupt G."/>
            <person name="Haase D."/>
            <person name="Schoof H."/>
            <person name="Rudd S."/>
            <person name="Zaccaria P."/>
            <person name="Mewes H.-W."/>
            <person name="Mayer K.F.X."/>
            <person name="Kaul S."/>
            <person name="Town C.D."/>
            <person name="Koo H.L."/>
            <person name="Tallon L.J."/>
            <person name="Jenkins J."/>
            <person name="Rooney T."/>
            <person name="Rizzo M."/>
            <person name="Walts A."/>
            <person name="Utterback T."/>
            <person name="Fujii C.Y."/>
            <person name="Shea T.P."/>
            <person name="Creasy T.H."/>
            <person name="Haas B."/>
            <person name="Maiti R."/>
            <person name="Wu D."/>
            <person name="Peterson J."/>
            <person name="Van Aken S."/>
            <person name="Pai G."/>
            <person name="Militscher J."/>
            <person name="Sellers P."/>
            <person name="Gill J.E."/>
            <person name="Feldblyum T.V."/>
            <person name="Preuss D."/>
            <person name="Lin X."/>
            <person name="Nierman W.C."/>
            <person name="Salzberg S.L."/>
            <person name="White O."/>
            <person name="Venter J.C."/>
            <person name="Fraser C.M."/>
            <person name="Kaneko T."/>
            <person name="Nakamura Y."/>
            <person name="Sato S."/>
            <person name="Kato T."/>
            <person name="Asamizu E."/>
            <person name="Sasamoto S."/>
            <person name="Kimura T."/>
            <person name="Idesawa K."/>
            <person name="Kawashima K."/>
            <person name="Kishida Y."/>
            <person name="Kiyokawa C."/>
            <person name="Kohara M."/>
            <person name="Matsumoto M."/>
            <person name="Matsuno A."/>
            <person name="Muraki A."/>
            <person name="Nakayama S."/>
            <person name="Nakazaki N."/>
            <person name="Shinpo S."/>
            <person name="Takeuchi C."/>
            <person name="Wada T."/>
            <person name="Watanabe A."/>
            <person name="Yamada M."/>
            <person name="Yasuda M."/>
            <person name="Tabata S."/>
        </authorList>
    </citation>
    <scope>NUCLEOTIDE SEQUENCE [LARGE SCALE GENOMIC DNA]</scope>
    <source>
        <strain>cv. Columbia</strain>
    </source>
</reference>
<reference key="2">
    <citation type="journal article" date="2017" name="Plant J.">
        <title>Araport11: a complete reannotation of the Arabidopsis thaliana reference genome.</title>
        <authorList>
            <person name="Cheng C.Y."/>
            <person name="Krishnakumar V."/>
            <person name="Chan A.P."/>
            <person name="Thibaud-Nissen F."/>
            <person name="Schobel S."/>
            <person name="Town C.D."/>
        </authorList>
    </citation>
    <scope>GENOME REANNOTATION</scope>
    <source>
        <strain>cv. Columbia</strain>
    </source>
</reference>
<reference key="3">
    <citation type="journal article" date="2002" name="Trends Plant Sci.">
        <title>A simple nomenclature for a complex proton pump: VHA genes encode the vacuolar H(+)-ATPase.</title>
        <authorList>
            <person name="Sze H."/>
            <person name="Schumacher K."/>
            <person name="Mueller M.L."/>
            <person name="Padmanaban S."/>
            <person name="Taiz L."/>
        </authorList>
    </citation>
    <scope>GENE FAMILY</scope>
    <scope>NOMENCLATURE</scope>
</reference>
<dbReference type="EMBL" id="AC012562">
    <property type="protein sequence ID" value="AAG51352.1"/>
    <property type="molecule type" value="Genomic_DNA"/>
</dbReference>
<dbReference type="EMBL" id="CP002686">
    <property type="protein sequence ID" value="AEE74646.1"/>
    <property type="molecule type" value="Genomic_DNA"/>
</dbReference>
<dbReference type="RefSeq" id="NP_187468.1">
    <property type="nucleotide sequence ID" value="NM_111690.2"/>
</dbReference>
<dbReference type="SMR" id="Q9C9Z8"/>
<dbReference type="BioGRID" id="5338">
    <property type="interactions" value="8"/>
</dbReference>
<dbReference type="FunCoup" id="Q9C9Z8">
    <property type="interactions" value="2458"/>
</dbReference>
<dbReference type="STRING" id="3702.Q9C9Z8"/>
<dbReference type="TCDB" id="3.A.2.2.5">
    <property type="family name" value="the h+- or na+-translocating f-type, v-type and a-type atpase (f-atpase) superfamily"/>
</dbReference>
<dbReference type="iPTMnet" id="Q9C9Z8"/>
<dbReference type="PaxDb" id="3702-AT3G08560.1"/>
<dbReference type="ProteomicsDB" id="228554"/>
<dbReference type="EnsemblPlants" id="AT3G08560.1">
    <property type="protein sequence ID" value="AT3G08560.1"/>
    <property type="gene ID" value="AT3G08560"/>
</dbReference>
<dbReference type="GeneID" id="820003"/>
<dbReference type="Gramene" id="AT3G08560.1">
    <property type="protein sequence ID" value="AT3G08560.1"/>
    <property type="gene ID" value="AT3G08560"/>
</dbReference>
<dbReference type="KEGG" id="ath:AT3G08560"/>
<dbReference type="Araport" id="AT3G08560"/>
<dbReference type="TAIR" id="AT3G08560">
    <property type="gene designation" value="VHA-E2"/>
</dbReference>
<dbReference type="eggNOG" id="KOG1664">
    <property type="taxonomic scope" value="Eukaryota"/>
</dbReference>
<dbReference type="HOGENOM" id="CLU_073641_1_0_1"/>
<dbReference type="InParanoid" id="Q9C9Z8"/>
<dbReference type="OMA" id="CRPQDHL"/>
<dbReference type="OrthoDB" id="10263003at2759"/>
<dbReference type="PhylomeDB" id="Q9C9Z8"/>
<dbReference type="PRO" id="PR:Q9C9Z8"/>
<dbReference type="Proteomes" id="UP000006548">
    <property type="component" value="Chromosome 3"/>
</dbReference>
<dbReference type="ExpressionAtlas" id="Q9C9Z8">
    <property type="expression patterns" value="baseline and differential"/>
</dbReference>
<dbReference type="GO" id="GO:0005829">
    <property type="term" value="C:cytosol"/>
    <property type="evidence" value="ECO:0007005"/>
    <property type="project" value="TAIR"/>
</dbReference>
<dbReference type="GO" id="GO:0033178">
    <property type="term" value="C:proton-transporting two-sector ATPase complex, catalytic domain"/>
    <property type="evidence" value="ECO:0007669"/>
    <property type="project" value="InterPro"/>
</dbReference>
<dbReference type="GO" id="GO:0005774">
    <property type="term" value="C:vacuolar membrane"/>
    <property type="evidence" value="ECO:0007669"/>
    <property type="project" value="UniProtKB-SubCell"/>
</dbReference>
<dbReference type="GO" id="GO:0005773">
    <property type="term" value="C:vacuole"/>
    <property type="evidence" value="ECO:0007005"/>
    <property type="project" value="TAIR"/>
</dbReference>
<dbReference type="GO" id="GO:0046961">
    <property type="term" value="F:proton-transporting ATPase activity, rotational mechanism"/>
    <property type="evidence" value="ECO:0007669"/>
    <property type="project" value="InterPro"/>
</dbReference>
<dbReference type="FunFam" id="3.30.2320.30:FF:000002">
    <property type="entry name" value="V-type proton ATPase subunit E3"/>
    <property type="match status" value="1"/>
</dbReference>
<dbReference type="Gene3D" id="6.10.250.1620">
    <property type="match status" value="1"/>
</dbReference>
<dbReference type="Gene3D" id="3.30.2320.30">
    <property type="entry name" value="ATP synthase, E subunit, C-terminal"/>
    <property type="match status" value="1"/>
</dbReference>
<dbReference type="HAMAP" id="MF_00311">
    <property type="entry name" value="ATP_synth_E_arch"/>
    <property type="match status" value="1"/>
</dbReference>
<dbReference type="InterPro" id="IPR038495">
    <property type="entry name" value="ATPase_E_C"/>
</dbReference>
<dbReference type="InterPro" id="IPR002842">
    <property type="entry name" value="ATPase_V1_Esu"/>
</dbReference>
<dbReference type="PANTHER" id="PTHR45715">
    <property type="entry name" value="ATPASE H+-TRANSPORTING V1 SUBUNIT E1A-RELATED"/>
    <property type="match status" value="1"/>
</dbReference>
<dbReference type="Pfam" id="PF01991">
    <property type="entry name" value="vATP-synt_E"/>
    <property type="match status" value="1"/>
</dbReference>
<dbReference type="SUPFAM" id="SSF160527">
    <property type="entry name" value="V-type ATPase subunit E-like"/>
    <property type="match status" value="1"/>
</dbReference>
<evidence type="ECO:0000250" key="1"/>
<evidence type="ECO:0000250" key="2">
    <source>
        <dbReference type="UniProtKB" id="Q39258"/>
    </source>
</evidence>
<evidence type="ECO:0000255" key="3"/>
<evidence type="ECO:0000305" key="4"/>
<sequence>MNDADVSKQIQQMVRFIRQEAEEKANEISISAEEEFNIERLQLLESAKRKLRQDYDRKLKQVDIRKRIDYSTQLNASRIKYLQAQDDVVTAMKDSAAKDLLRVSNDKNNYKKLLKSLIIESLLRLKEPSVLLRCREMDKKVVESVIEDAKRQYAEKAKVGSPKITIDEKVFLPPPPNPKLPDSHDPHCSGGVVLASQDGKIVCENTLDARLDVAFRQKLPQIRTRLVGAPETSRA</sequence>
<feature type="chain" id="PRO_0000373818" description="V-type proton ATPase subunit E2">
    <location>
        <begin position="1"/>
        <end position="235"/>
    </location>
</feature>
<feature type="coiled-coil region" evidence="3">
    <location>
        <begin position="8"/>
        <end position="64"/>
    </location>
</feature>
<feature type="modified residue" description="N-acetylmethionine" evidence="2">
    <location>
        <position position="1"/>
    </location>
</feature>
<keyword id="KW-0007">Acetylation</keyword>
<keyword id="KW-0175">Coiled coil</keyword>
<keyword id="KW-0375">Hydrogen ion transport</keyword>
<keyword id="KW-0406">Ion transport</keyword>
<keyword id="KW-0472">Membrane</keyword>
<keyword id="KW-1185">Reference proteome</keyword>
<keyword id="KW-0813">Transport</keyword>
<keyword id="KW-0926">Vacuole</keyword>